<evidence type="ECO:0000250" key="1"/>
<evidence type="ECO:0000255" key="2"/>
<evidence type="ECO:0000256" key="3">
    <source>
        <dbReference type="SAM" id="MobiDB-lite"/>
    </source>
</evidence>
<evidence type="ECO:0000305" key="4"/>
<evidence type="ECO:0007744" key="5">
    <source>
    </source>
</evidence>
<evidence type="ECO:0007744" key="6">
    <source>
    </source>
</evidence>
<evidence type="ECO:0007744" key="7">
    <source>
    </source>
</evidence>
<protein>
    <recommendedName>
        <fullName>Peroxisomal membrane protein PEX30</fullName>
    </recommendedName>
    <alternativeName>
        <fullName>Peroxin-30</fullName>
    </alternativeName>
</protein>
<sequence>MSGNTTNVHETRAKFAETLQPRIGGNTTKVIRAALEKNEAESGVSEDNDNGSLEKVNVATSPLLTSTPPTISKALVKLYPYLILIDEFLNVVTWTGKNIWSSVLMLCLFITTVEYFETLVKYFGHLAIIAILWGYSLLDNYIEGTLSSSPTLEDIALLMNRVSLKSDILLSPMVNLGTQDIQRLLYTTVILSPIYVMITWLLLPPRSLMLMVGMFLLTYHSPWSKVARRLLWKFKIVRLLVFYVTGLDLGGINKDQGIFATVQKQVKKLASTENSNGVLSDSKPIRFTYVLYENQRRWLGIGWKPSMLSYERTPWTDEFLNEAPSPENFHLPEETNTMVWRWVDKTWRLDMTNDGAIQVPNSKARTSADPSPDEGFIYYDNTWKKPSKEDSFSKYTRRRRWVRTAELVKTSDFDESVINSNRNSAIEQKVEENSTNGLTAEQELGSNKQEKDNAKKVGEPTTEETKEFAEASNINEGEFERISSTDEEVLKSRARDRLAKVLDDTEEKEQSNPTIGRDSKKAV</sequence>
<dbReference type="EMBL" id="U20618">
    <property type="protein sequence ID" value="AAB64522.1"/>
    <property type="molecule type" value="Genomic_DNA"/>
</dbReference>
<dbReference type="EMBL" id="AY723849">
    <property type="protein sequence ID" value="AAU09766.1"/>
    <property type="molecule type" value="Genomic_DNA"/>
</dbReference>
<dbReference type="EMBL" id="BK006945">
    <property type="protein sequence ID" value="DAA09632.1"/>
    <property type="molecule type" value="Genomic_DNA"/>
</dbReference>
<dbReference type="PIR" id="S53401">
    <property type="entry name" value="S53401"/>
</dbReference>
<dbReference type="RefSeq" id="NP_013428.1">
    <property type="nucleotide sequence ID" value="NM_001182213.1"/>
</dbReference>
<dbReference type="BioGRID" id="31587">
    <property type="interactions" value="119"/>
</dbReference>
<dbReference type="DIP" id="DIP-1800N"/>
<dbReference type="FunCoup" id="Q06169">
    <property type="interactions" value="85"/>
</dbReference>
<dbReference type="IntAct" id="Q06169">
    <property type="interactions" value="10"/>
</dbReference>
<dbReference type="MINT" id="Q06169"/>
<dbReference type="STRING" id="4932.YLR324W"/>
<dbReference type="TCDB" id="3.A.20.1.5">
    <property type="family name" value="the peroxisomal protein importer (ppi) family"/>
</dbReference>
<dbReference type="iPTMnet" id="Q06169"/>
<dbReference type="PaxDb" id="4932-YLR324W"/>
<dbReference type="PeptideAtlas" id="Q06169"/>
<dbReference type="EnsemblFungi" id="YLR324W_mRNA">
    <property type="protein sequence ID" value="YLR324W"/>
    <property type="gene ID" value="YLR324W"/>
</dbReference>
<dbReference type="GeneID" id="851034"/>
<dbReference type="KEGG" id="sce:YLR324W"/>
<dbReference type="AGR" id="SGD:S000004316"/>
<dbReference type="SGD" id="S000004316">
    <property type="gene designation" value="PEX30"/>
</dbReference>
<dbReference type="VEuPathDB" id="FungiDB:YLR324W"/>
<dbReference type="eggNOG" id="ENOG502QT80">
    <property type="taxonomic scope" value="Eukaryota"/>
</dbReference>
<dbReference type="GeneTree" id="ENSGT00940000176349"/>
<dbReference type="HOGENOM" id="CLU_016397_0_0_1"/>
<dbReference type="InParanoid" id="Q06169"/>
<dbReference type="OMA" id="PPFYILT"/>
<dbReference type="OrthoDB" id="5586090at2759"/>
<dbReference type="BioCyc" id="YEAST:G3O-32407-MONOMER"/>
<dbReference type="BioGRID-ORCS" id="851034">
    <property type="hits" value="0 hits in 10 CRISPR screens"/>
</dbReference>
<dbReference type="PRO" id="PR:Q06169"/>
<dbReference type="Proteomes" id="UP000002311">
    <property type="component" value="Chromosome XII"/>
</dbReference>
<dbReference type="RNAct" id="Q06169">
    <property type="molecule type" value="protein"/>
</dbReference>
<dbReference type="GO" id="GO:0071944">
    <property type="term" value="C:cell periphery"/>
    <property type="evidence" value="ECO:0007005"/>
    <property type="project" value="SGD"/>
</dbReference>
<dbReference type="GO" id="GO:0005933">
    <property type="term" value="C:cellular bud"/>
    <property type="evidence" value="ECO:0007005"/>
    <property type="project" value="SGD"/>
</dbReference>
<dbReference type="GO" id="GO:0005783">
    <property type="term" value="C:endoplasmic reticulum"/>
    <property type="evidence" value="ECO:0000314"/>
    <property type="project" value="SGD"/>
</dbReference>
<dbReference type="GO" id="GO:0071782">
    <property type="term" value="C:endoplasmic reticulum tubular network"/>
    <property type="evidence" value="ECO:0000314"/>
    <property type="project" value="SGD"/>
</dbReference>
<dbReference type="GO" id="GO:0005778">
    <property type="term" value="C:peroxisomal membrane"/>
    <property type="evidence" value="ECO:0000314"/>
    <property type="project" value="SGD"/>
</dbReference>
<dbReference type="GO" id="GO:0005777">
    <property type="term" value="C:peroxisome"/>
    <property type="evidence" value="ECO:0000314"/>
    <property type="project" value="SGD"/>
</dbReference>
<dbReference type="GO" id="GO:0042802">
    <property type="term" value="F:identical protein binding"/>
    <property type="evidence" value="ECO:0000353"/>
    <property type="project" value="IntAct"/>
</dbReference>
<dbReference type="GO" id="GO:0032581">
    <property type="term" value="P:ER-dependent peroxisome organization"/>
    <property type="evidence" value="ECO:0000316"/>
    <property type="project" value="SGD"/>
</dbReference>
<dbReference type="GO" id="GO:0007031">
    <property type="term" value="P:peroxisome organization"/>
    <property type="evidence" value="ECO:0000315"/>
    <property type="project" value="SGD"/>
</dbReference>
<dbReference type="GO" id="GO:1900063">
    <property type="term" value="P:regulation of peroxisome organization"/>
    <property type="evidence" value="ECO:0000316"/>
    <property type="project" value="SGD"/>
</dbReference>
<dbReference type="InterPro" id="IPR006614">
    <property type="entry name" value="Peroxin/Ferlin"/>
</dbReference>
<dbReference type="InterPro" id="IPR052646">
    <property type="entry name" value="Peroxisomal_PEX28-32"/>
</dbReference>
<dbReference type="InterPro" id="IPR010482">
    <property type="entry name" value="TECPR1-like_DysF"/>
</dbReference>
<dbReference type="PANTHER" id="PTHR31679">
    <property type="entry name" value="PEROXISOMAL MEMBRANE PROTEIN PEX30-RELATED"/>
    <property type="match status" value="1"/>
</dbReference>
<dbReference type="PANTHER" id="PTHR31679:SF2">
    <property type="entry name" value="PEROXISOMAL MEMBRANE PROTEIN PEX30-RELATED"/>
    <property type="match status" value="1"/>
</dbReference>
<dbReference type="Pfam" id="PF06398">
    <property type="entry name" value="Pex24p"/>
    <property type="match status" value="1"/>
</dbReference>
<dbReference type="SMART" id="SM00694">
    <property type="entry name" value="DysFC"/>
    <property type="match status" value="1"/>
</dbReference>
<dbReference type="SMART" id="SM00693">
    <property type="entry name" value="DysFN"/>
    <property type="match status" value="1"/>
</dbReference>
<gene>
    <name type="primary">PEX30</name>
    <name type="ordered locus">YLR324W</name>
</gene>
<reference key="1">
    <citation type="journal article" date="1997" name="Nature">
        <title>The nucleotide sequence of Saccharomyces cerevisiae chromosome XII.</title>
        <authorList>
            <person name="Johnston M."/>
            <person name="Hillier L.W."/>
            <person name="Riles L."/>
            <person name="Albermann K."/>
            <person name="Andre B."/>
            <person name="Ansorge W."/>
            <person name="Benes V."/>
            <person name="Brueckner M."/>
            <person name="Delius H."/>
            <person name="Dubois E."/>
            <person name="Duesterhoeft A."/>
            <person name="Entian K.-D."/>
            <person name="Floeth M."/>
            <person name="Goffeau A."/>
            <person name="Hebling U."/>
            <person name="Heumann K."/>
            <person name="Heuss-Neitzel D."/>
            <person name="Hilbert H."/>
            <person name="Hilger F."/>
            <person name="Kleine K."/>
            <person name="Koetter P."/>
            <person name="Louis E.J."/>
            <person name="Messenguy F."/>
            <person name="Mewes H.-W."/>
            <person name="Miosga T."/>
            <person name="Moestl D."/>
            <person name="Mueller-Auer S."/>
            <person name="Nentwich U."/>
            <person name="Obermaier B."/>
            <person name="Piravandi E."/>
            <person name="Pohl T.M."/>
            <person name="Portetelle D."/>
            <person name="Purnelle B."/>
            <person name="Rechmann S."/>
            <person name="Rieger M."/>
            <person name="Rinke M."/>
            <person name="Rose M."/>
            <person name="Scharfe M."/>
            <person name="Scherens B."/>
            <person name="Scholler P."/>
            <person name="Schwager C."/>
            <person name="Schwarz S."/>
            <person name="Underwood A.P."/>
            <person name="Urrestarazu L.A."/>
            <person name="Vandenbol M."/>
            <person name="Verhasselt P."/>
            <person name="Vierendeels F."/>
            <person name="Voet M."/>
            <person name="Volckaert G."/>
            <person name="Voss H."/>
            <person name="Wambutt R."/>
            <person name="Wedler E."/>
            <person name="Wedler H."/>
            <person name="Zimmermann F.K."/>
            <person name="Zollner A."/>
            <person name="Hani J."/>
            <person name="Hoheisel J.D."/>
        </authorList>
    </citation>
    <scope>NUCLEOTIDE SEQUENCE [LARGE SCALE GENOMIC DNA]</scope>
    <source>
        <strain>ATCC 204508 / S288c</strain>
    </source>
</reference>
<reference key="2">
    <citation type="journal article" date="2014" name="G3 (Bethesda)">
        <title>The reference genome sequence of Saccharomyces cerevisiae: Then and now.</title>
        <authorList>
            <person name="Engel S.R."/>
            <person name="Dietrich F.S."/>
            <person name="Fisk D.G."/>
            <person name="Binkley G."/>
            <person name="Balakrishnan R."/>
            <person name="Costanzo M.C."/>
            <person name="Dwight S.S."/>
            <person name="Hitz B.C."/>
            <person name="Karra K."/>
            <person name="Nash R.S."/>
            <person name="Weng S."/>
            <person name="Wong E.D."/>
            <person name="Lloyd P."/>
            <person name="Skrzypek M.S."/>
            <person name="Miyasato S.R."/>
            <person name="Simison M."/>
            <person name="Cherry J.M."/>
        </authorList>
    </citation>
    <scope>GENOME REANNOTATION</scope>
    <source>
        <strain>ATCC 204508 / S288c</strain>
    </source>
</reference>
<reference key="3">
    <citation type="journal article" date="2007" name="Genome Res.">
        <title>Approaching a complete repository of sequence-verified protein-encoding clones for Saccharomyces cerevisiae.</title>
        <authorList>
            <person name="Hu Y."/>
            <person name="Rolfs A."/>
            <person name="Bhullar B."/>
            <person name="Murthy T.V.S."/>
            <person name="Zhu C."/>
            <person name="Berger M.F."/>
            <person name="Camargo A.A."/>
            <person name="Kelley F."/>
            <person name="McCarron S."/>
            <person name="Jepson D."/>
            <person name="Richardson A."/>
            <person name="Raphael J."/>
            <person name="Moreira D."/>
            <person name="Taycher E."/>
            <person name="Zuo D."/>
            <person name="Mohr S."/>
            <person name="Kane M.F."/>
            <person name="Williamson J."/>
            <person name="Simpson A.J.G."/>
            <person name="Bulyk M.L."/>
            <person name="Harlow E."/>
            <person name="Marsischky G."/>
            <person name="Kolodner R.D."/>
            <person name="LaBaer J."/>
        </authorList>
    </citation>
    <scope>NUCLEOTIDE SEQUENCE [GENOMIC DNA]</scope>
    <source>
        <strain>ATCC 204508 / S288c</strain>
    </source>
</reference>
<reference key="4">
    <citation type="journal article" date="2008" name="Mol. Cell. Proteomics">
        <title>A multidimensional chromatography technology for in-depth phosphoproteome analysis.</title>
        <authorList>
            <person name="Albuquerque C.P."/>
            <person name="Smolka M.B."/>
            <person name="Payne S.H."/>
            <person name="Bafna V."/>
            <person name="Eng J."/>
            <person name="Zhou H."/>
        </authorList>
    </citation>
    <scope>PHOSPHORYLATION [LARGE SCALE ANALYSIS] AT SER-52; SER-420 AND SER-424</scope>
    <scope>IDENTIFICATION BY MASS SPECTROMETRY [LARGE SCALE ANALYSIS]</scope>
</reference>
<reference key="5">
    <citation type="journal article" date="2009" name="Science">
        <title>Global analysis of Cdk1 substrate phosphorylation sites provides insights into evolution.</title>
        <authorList>
            <person name="Holt L.J."/>
            <person name="Tuch B.B."/>
            <person name="Villen J."/>
            <person name="Johnson A.D."/>
            <person name="Gygi S.P."/>
            <person name="Morgan D.O."/>
        </authorList>
    </citation>
    <scope>PHOSPHORYLATION [LARGE SCALE ANALYSIS] AT SER-420 AND SER-424</scope>
    <scope>IDENTIFICATION BY MASS SPECTROMETRY [LARGE SCALE ANALYSIS]</scope>
</reference>
<reference key="6">
    <citation type="journal article" date="2012" name="Proc. Natl. Acad. Sci. U.S.A.">
        <title>N-terminal acetylome analyses and functional insights of the N-terminal acetyltransferase NatB.</title>
        <authorList>
            <person name="Van Damme P."/>
            <person name="Lasa M."/>
            <person name="Polevoda B."/>
            <person name="Gazquez C."/>
            <person name="Elosegui-Artola A."/>
            <person name="Kim D.S."/>
            <person name="De Juan-Pardo E."/>
            <person name="Demeyer K."/>
            <person name="Hole K."/>
            <person name="Larrea E."/>
            <person name="Timmerman E."/>
            <person name="Prieto J."/>
            <person name="Arnesen T."/>
            <person name="Sherman F."/>
            <person name="Gevaert K."/>
            <person name="Aldabe R."/>
        </authorList>
    </citation>
    <scope>ACETYLATION [LARGE SCALE ANALYSIS] AT SER-2</scope>
    <scope>CLEAVAGE OF INITIATOR METHIONINE [LARGE SCALE ANALYSIS]</scope>
    <scope>IDENTIFICATION BY MASS SPECTROMETRY [LARGE SCALE ANALYSIS]</scope>
</reference>
<keyword id="KW-0007">Acetylation</keyword>
<keyword id="KW-0472">Membrane</keyword>
<keyword id="KW-0576">Peroxisome</keyword>
<keyword id="KW-0597">Phosphoprotein</keyword>
<keyword id="KW-1185">Reference proteome</keyword>
<keyword id="KW-0812">Transmembrane</keyword>
<keyword id="KW-1133">Transmembrane helix</keyword>
<feature type="initiator methionine" description="Removed" evidence="7">
    <location>
        <position position="1"/>
    </location>
</feature>
<feature type="chain" id="PRO_0000252270" description="Peroxisomal membrane protein PEX30">
    <location>
        <begin position="2"/>
        <end position="523"/>
    </location>
</feature>
<feature type="transmembrane region" description="Helical" evidence="2">
    <location>
        <begin position="91"/>
        <end position="111"/>
    </location>
</feature>
<feature type="transmembrane region" description="Helical" evidence="2">
    <location>
        <begin position="118"/>
        <end position="138"/>
    </location>
</feature>
<feature type="transmembrane region" description="Helical" evidence="2">
    <location>
        <begin position="184"/>
        <end position="204"/>
    </location>
</feature>
<feature type="transmembrane region" description="Helical" evidence="2">
    <location>
        <begin position="207"/>
        <end position="227"/>
    </location>
</feature>
<feature type="region of interest" description="Disordered" evidence="3">
    <location>
        <begin position="429"/>
        <end position="523"/>
    </location>
</feature>
<feature type="compositionally biased region" description="Polar residues" evidence="3">
    <location>
        <begin position="433"/>
        <end position="447"/>
    </location>
</feature>
<feature type="compositionally biased region" description="Basic and acidic residues" evidence="3">
    <location>
        <begin position="448"/>
        <end position="469"/>
    </location>
</feature>
<feature type="compositionally biased region" description="Basic and acidic residues" evidence="3">
    <location>
        <begin position="478"/>
        <end position="503"/>
    </location>
</feature>
<feature type="modified residue" description="N-acetylserine" evidence="7">
    <location>
        <position position="2"/>
    </location>
</feature>
<feature type="modified residue" description="Phosphoserine" evidence="5">
    <location>
        <position position="52"/>
    </location>
</feature>
<feature type="modified residue" description="Phosphoserine" evidence="5 6">
    <location>
        <position position="420"/>
    </location>
</feature>
<feature type="modified residue" description="Phosphoserine" evidence="5 6">
    <location>
        <position position="424"/>
    </location>
</feature>
<feature type="sequence conflict" description="In Ref. 3; AAU09766." evidence="4" ref="3">
    <original>G</original>
    <variation>S</variation>
    <location>
        <position position="257"/>
    </location>
</feature>
<accession>Q06169</accession>
<accession>D6VYW6</accession>
<accession>Q66R43</accession>
<name>PEX30_YEAST</name>
<proteinExistence type="evidence at protein level"/>
<comment type="interaction">
    <interactant intactId="EBI-31008">
        <id>Q06169</id>
    </interactant>
    <interactant intactId="EBI-36170">
        <id>Q03370</id>
        <label>PEX29</label>
    </interactant>
    <organismsDiffer>false</organismsDiffer>
    <experiments>2</experiments>
</comment>
<comment type="interaction">
    <interactant intactId="EBI-31008">
        <id>Q06169</id>
    </interactant>
    <interactant intactId="EBI-31008">
        <id>Q06169</id>
        <label>PEX30</label>
    </interactant>
    <organismsDiffer>false</organismsDiffer>
    <experiments>3</experiments>
</comment>
<comment type="subcellular location">
    <subcellularLocation>
        <location evidence="1">Peroxisome membrane</location>
        <topology evidence="1">Multi-pass membrane protein</topology>
    </subcellularLocation>
</comment>
<comment type="similarity">
    <text evidence="4">Belongs to the PEX28-32 family. PEX30/31 subfamily.</text>
</comment>
<organism>
    <name type="scientific">Saccharomyces cerevisiae (strain ATCC 204508 / S288c)</name>
    <name type="common">Baker's yeast</name>
    <dbReference type="NCBI Taxonomy" id="559292"/>
    <lineage>
        <taxon>Eukaryota</taxon>
        <taxon>Fungi</taxon>
        <taxon>Dikarya</taxon>
        <taxon>Ascomycota</taxon>
        <taxon>Saccharomycotina</taxon>
        <taxon>Saccharomycetes</taxon>
        <taxon>Saccharomycetales</taxon>
        <taxon>Saccharomycetaceae</taxon>
        <taxon>Saccharomyces</taxon>
    </lineage>
</organism>